<feature type="chain" id="PRO_0000334374" description="Na(+)/H(+) antiporter NhaA 2">
    <location>
        <begin position="1"/>
        <end position="453"/>
    </location>
</feature>
<feature type="transmembrane region" description="Helical" evidence="1">
    <location>
        <begin position="23"/>
        <end position="43"/>
    </location>
</feature>
<feature type="transmembrane region" description="Helical" evidence="1">
    <location>
        <begin position="74"/>
        <end position="94"/>
    </location>
</feature>
<feature type="transmembrane region" description="Helical" evidence="1">
    <location>
        <begin position="111"/>
        <end position="131"/>
    </location>
</feature>
<feature type="transmembrane region" description="Helical" evidence="1">
    <location>
        <begin position="139"/>
        <end position="159"/>
    </location>
</feature>
<feature type="transmembrane region" description="Helical" evidence="1">
    <location>
        <begin position="168"/>
        <end position="188"/>
    </location>
</feature>
<feature type="transmembrane region" description="Helical" evidence="1">
    <location>
        <begin position="191"/>
        <end position="211"/>
    </location>
</feature>
<feature type="transmembrane region" description="Helical" evidence="1">
    <location>
        <begin position="214"/>
        <end position="234"/>
    </location>
</feature>
<feature type="transmembrane region" description="Helical" evidence="1">
    <location>
        <begin position="235"/>
        <end position="255"/>
    </location>
</feature>
<feature type="transmembrane region" description="Helical" evidence="1">
    <location>
        <begin position="316"/>
        <end position="336"/>
    </location>
</feature>
<feature type="transmembrane region" description="Helical" evidence="1">
    <location>
        <begin position="345"/>
        <end position="365"/>
    </location>
</feature>
<feature type="transmembrane region" description="Helical" evidence="1">
    <location>
        <begin position="386"/>
        <end position="406"/>
    </location>
</feature>
<feature type="transmembrane region" description="Helical" evidence="1">
    <location>
        <begin position="419"/>
        <end position="439"/>
    </location>
</feature>
<comment type="function">
    <text evidence="1">Na(+)/H(+) antiporter that extrudes sodium in exchange for external protons.</text>
</comment>
<comment type="catalytic activity">
    <reaction evidence="1">
        <text>Na(+)(in) + 2 H(+)(out) = Na(+)(out) + 2 H(+)(in)</text>
        <dbReference type="Rhea" id="RHEA:29251"/>
        <dbReference type="ChEBI" id="CHEBI:15378"/>
        <dbReference type="ChEBI" id="CHEBI:29101"/>
    </reaction>
    <physiologicalReaction direction="left-to-right" evidence="1">
        <dbReference type="Rhea" id="RHEA:29252"/>
    </physiologicalReaction>
</comment>
<comment type="subcellular location">
    <subcellularLocation>
        <location evidence="1">Cell inner membrane</location>
        <topology evidence="1">Multi-pass membrane protein</topology>
    </subcellularLocation>
</comment>
<comment type="similarity">
    <text evidence="1">Belongs to the NhaA Na(+)/H(+) (TC 2.A.33) antiporter family.</text>
</comment>
<evidence type="ECO:0000255" key="1">
    <source>
        <dbReference type="HAMAP-Rule" id="MF_01844"/>
    </source>
</evidence>
<sequence length="453" mass="47775">MHKQELPRAQKLAERAFANLERFLHIEAVSGIVLLIAAVAALIWANSPAADSYEALWHTPLTFGVGSHVYSQSLHFWINDGLMTIFFLVVGMEIRREIHEGALSSLRQATLPMAAAVGGVAVPALLYLSFGHAPADQQGWAVPTATDIAFAVGVLALLGKSIPSNVRVFLLALAIIDDIIAVLIIAFFYSGGLDYTGFGVAVIGLLMVIGLQKIGVGSAYAYVIPGAIVWLGILLTGAHPTLAGVVLGLMTPVTAMPMRERPLDAITRFTGELLGRAKAPEQDASDLMDPLKRLRLAQRELLPPVVRMQGTLHPWVAFGIMPVFALANAGVSLSGVDLSAEGPQWVMIAVAVALVAGKPLGIVSVSWLMVRLGWCVLPAEVNWRSIMLVGLLAGIGFTMSIFIANLAFVDPGSLGAAKLGVLSASLIAAVLGLTWGVWSMRSAASATKAGSPT</sequence>
<gene>
    <name evidence="1" type="primary">nhaA2</name>
    <name type="ordered locus">PP_3958</name>
</gene>
<accession>Q88FW9</accession>
<keyword id="KW-0050">Antiport</keyword>
<keyword id="KW-0997">Cell inner membrane</keyword>
<keyword id="KW-1003">Cell membrane</keyword>
<keyword id="KW-0406">Ion transport</keyword>
<keyword id="KW-0472">Membrane</keyword>
<keyword id="KW-1185">Reference proteome</keyword>
<keyword id="KW-0915">Sodium</keyword>
<keyword id="KW-0739">Sodium transport</keyword>
<keyword id="KW-0812">Transmembrane</keyword>
<keyword id="KW-1133">Transmembrane helix</keyword>
<keyword id="KW-0813">Transport</keyword>
<proteinExistence type="inferred from homology"/>
<dbReference type="EMBL" id="AE015451">
    <property type="protein sequence ID" value="AAN69552.1"/>
    <property type="molecule type" value="Genomic_DNA"/>
</dbReference>
<dbReference type="RefSeq" id="NP_746088.1">
    <property type="nucleotide sequence ID" value="NC_002947.4"/>
</dbReference>
<dbReference type="SMR" id="Q88FW9"/>
<dbReference type="STRING" id="160488.PP_3958"/>
<dbReference type="PaxDb" id="160488-PP_3958"/>
<dbReference type="KEGG" id="ppu:PP_3958"/>
<dbReference type="PATRIC" id="fig|160488.4.peg.4216"/>
<dbReference type="eggNOG" id="COG3004">
    <property type="taxonomic scope" value="Bacteria"/>
</dbReference>
<dbReference type="HOGENOM" id="CLU_015803_1_2_6"/>
<dbReference type="OrthoDB" id="9808135at2"/>
<dbReference type="PhylomeDB" id="Q88FW9"/>
<dbReference type="BioCyc" id="PPUT160488:G1G01-4223-MONOMER"/>
<dbReference type="Proteomes" id="UP000000556">
    <property type="component" value="Chromosome"/>
</dbReference>
<dbReference type="GO" id="GO:0005886">
    <property type="term" value="C:plasma membrane"/>
    <property type="evidence" value="ECO:0007669"/>
    <property type="project" value="UniProtKB-SubCell"/>
</dbReference>
<dbReference type="GO" id="GO:0015385">
    <property type="term" value="F:sodium:proton antiporter activity"/>
    <property type="evidence" value="ECO:0007669"/>
    <property type="project" value="TreeGrafter"/>
</dbReference>
<dbReference type="GO" id="GO:0006885">
    <property type="term" value="P:regulation of pH"/>
    <property type="evidence" value="ECO:0007669"/>
    <property type="project" value="InterPro"/>
</dbReference>
<dbReference type="Gene3D" id="1.20.1530.10">
    <property type="entry name" value="Na+/H+ antiporter like domain"/>
    <property type="match status" value="1"/>
</dbReference>
<dbReference type="HAMAP" id="MF_01844">
    <property type="entry name" value="NhaA"/>
    <property type="match status" value="1"/>
</dbReference>
<dbReference type="InterPro" id="IPR023171">
    <property type="entry name" value="Na/H_antiporter_dom_sf"/>
</dbReference>
<dbReference type="InterPro" id="IPR004670">
    <property type="entry name" value="NhaA"/>
</dbReference>
<dbReference type="NCBIfam" id="TIGR00773">
    <property type="entry name" value="NhaA"/>
    <property type="match status" value="1"/>
</dbReference>
<dbReference type="PANTHER" id="PTHR30341:SF0">
    <property type="entry name" value="NA(+)_H(+) ANTIPORTER NHAA"/>
    <property type="match status" value="1"/>
</dbReference>
<dbReference type="PANTHER" id="PTHR30341">
    <property type="entry name" value="SODIUM ION/PROTON ANTIPORTER NHAA-RELATED"/>
    <property type="match status" value="1"/>
</dbReference>
<dbReference type="Pfam" id="PF06965">
    <property type="entry name" value="Na_H_antiport_1"/>
    <property type="match status" value="1"/>
</dbReference>
<protein>
    <recommendedName>
        <fullName evidence="1">Na(+)/H(+) antiporter NhaA 2</fullName>
    </recommendedName>
    <alternativeName>
        <fullName evidence="1">Sodium/proton antiporter NhaA 2</fullName>
    </alternativeName>
</protein>
<reference key="1">
    <citation type="journal article" date="2002" name="Environ. Microbiol.">
        <title>Complete genome sequence and comparative analysis of the metabolically versatile Pseudomonas putida KT2440.</title>
        <authorList>
            <person name="Nelson K.E."/>
            <person name="Weinel C."/>
            <person name="Paulsen I.T."/>
            <person name="Dodson R.J."/>
            <person name="Hilbert H."/>
            <person name="Martins dos Santos V.A.P."/>
            <person name="Fouts D.E."/>
            <person name="Gill S.R."/>
            <person name="Pop M."/>
            <person name="Holmes M."/>
            <person name="Brinkac L.M."/>
            <person name="Beanan M.J."/>
            <person name="DeBoy R.T."/>
            <person name="Daugherty S.C."/>
            <person name="Kolonay J.F."/>
            <person name="Madupu R."/>
            <person name="Nelson W.C."/>
            <person name="White O."/>
            <person name="Peterson J.D."/>
            <person name="Khouri H.M."/>
            <person name="Hance I."/>
            <person name="Chris Lee P."/>
            <person name="Holtzapple E.K."/>
            <person name="Scanlan D."/>
            <person name="Tran K."/>
            <person name="Moazzez A."/>
            <person name="Utterback T.R."/>
            <person name="Rizzo M."/>
            <person name="Lee K."/>
            <person name="Kosack D."/>
            <person name="Moestl D."/>
            <person name="Wedler H."/>
            <person name="Lauber J."/>
            <person name="Stjepandic D."/>
            <person name="Hoheisel J."/>
            <person name="Straetz M."/>
            <person name="Heim S."/>
            <person name="Kiewitz C."/>
            <person name="Eisen J.A."/>
            <person name="Timmis K.N."/>
            <person name="Duesterhoeft A."/>
            <person name="Tuemmler B."/>
            <person name="Fraser C.M."/>
        </authorList>
    </citation>
    <scope>NUCLEOTIDE SEQUENCE [LARGE SCALE GENOMIC DNA]</scope>
    <source>
        <strain>ATCC 47054 / DSM 6125 / CFBP 8728 / NCIMB 11950 / KT2440</strain>
    </source>
</reference>
<name>NHAA2_PSEPK</name>
<organism>
    <name type="scientific">Pseudomonas putida (strain ATCC 47054 / DSM 6125 / CFBP 8728 / NCIMB 11950 / KT2440)</name>
    <dbReference type="NCBI Taxonomy" id="160488"/>
    <lineage>
        <taxon>Bacteria</taxon>
        <taxon>Pseudomonadati</taxon>
        <taxon>Pseudomonadota</taxon>
        <taxon>Gammaproteobacteria</taxon>
        <taxon>Pseudomonadales</taxon>
        <taxon>Pseudomonadaceae</taxon>
        <taxon>Pseudomonas</taxon>
    </lineage>
</organism>